<gene>
    <name evidence="1" type="primary">Fen1</name>
    <name type="ORF">AAEL005870</name>
</gene>
<name>FEN1_AEDAE</name>
<evidence type="ECO:0000255" key="1">
    <source>
        <dbReference type="HAMAP-Rule" id="MF_03140"/>
    </source>
</evidence>
<evidence type="ECO:0000256" key="2">
    <source>
        <dbReference type="SAM" id="MobiDB-lite"/>
    </source>
</evidence>
<comment type="function">
    <text evidence="1">Structure-specific nuclease with 5'-flap endonuclease and 5'-3' exonuclease activities involved in DNA replication and repair. During DNA replication, cleaves the 5'-overhanging flap structure that is generated by displacement synthesis when DNA polymerase encounters the 5'-end of a downstream Okazaki fragment. It enters the flap from the 5'-end and then tracks to cleave the flap base, leaving a nick for ligation. Also involved in the long patch base excision repair (LP-BER) pathway, by cleaving within the apurinic/apyrimidinic (AP) site-terminated flap. Acts as a genome stabilization factor that prevents flaps from equilibrating into structures that lead to duplications and deletions. Also possesses 5'-3' exonuclease activity on nicked or gapped double-stranded DNA, and exhibits RNase H activity. Also involved in replication and repair of rDNA and in repairing mitochondrial DNA.</text>
</comment>
<comment type="cofactor">
    <cofactor evidence="1">
        <name>Mg(2+)</name>
        <dbReference type="ChEBI" id="CHEBI:18420"/>
    </cofactor>
    <text evidence="1">Binds 2 magnesium ions per subunit. They probably participate in the reaction catalyzed by the enzyme. May bind an additional third magnesium ion after substrate binding.</text>
</comment>
<comment type="subunit">
    <text evidence="1">Interacts with PCNA. Three molecules of FEN1 bind to one PCNA trimer with each molecule binding to one PCNA monomer. PCNA stimulates the nuclease activity without altering cleavage specificity.</text>
</comment>
<comment type="subcellular location">
    <subcellularLocation>
        <location evidence="1">Nucleus</location>
        <location evidence="1">Nucleolus</location>
    </subcellularLocation>
    <subcellularLocation>
        <location evidence="1">Nucleus</location>
        <location evidence="1">Nucleoplasm</location>
    </subcellularLocation>
    <subcellularLocation>
        <location evidence="1">Mitochondrion</location>
    </subcellularLocation>
    <text evidence="1">Resides mostly in the nucleoli and relocalizes to the nucleoplasm upon DNA damage.</text>
</comment>
<comment type="PTM">
    <text evidence="1">Phosphorylated. Phosphorylation upon DNA damage induces relocalization to the nuclear plasma.</text>
</comment>
<comment type="similarity">
    <text evidence="1">Belongs to the XPG/RAD2 endonuclease family. FEN1 subfamily.</text>
</comment>
<organism>
    <name type="scientific">Aedes aegypti</name>
    <name type="common">Yellowfever mosquito</name>
    <name type="synonym">Culex aegypti</name>
    <dbReference type="NCBI Taxonomy" id="7159"/>
    <lineage>
        <taxon>Eukaryota</taxon>
        <taxon>Metazoa</taxon>
        <taxon>Ecdysozoa</taxon>
        <taxon>Arthropoda</taxon>
        <taxon>Hexapoda</taxon>
        <taxon>Insecta</taxon>
        <taxon>Pterygota</taxon>
        <taxon>Neoptera</taxon>
        <taxon>Endopterygota</taxon>
        <taxon>Diptera</taxon>
        <taxon>Nematocera</taxon>
        <taxon>Culicoidea</taxon>
        <taxon>Culicidae</taxon>
        <taxon>Culicinae</taxon>
        <taxon>Aedini</taxon>
        <taxon>Aedes</taxon>
        <taxon>Stegomyia</taxon>
    </lineage>
</organism>
<reference key="1">
    <citation type="journal article" date="2007" name="Science">
        <title>Genome sequence of Aedes aegypti, a major arbovirus vector.</title>
        <authorList>
            <person name="Nene V."/>
            <person name="Wortman J.R."/>
            <person name="Lawson D."/>
            <person name="Haas B.J."/>
            <person name="Kodira C.D."/>
            <person name="Tu Z.J."/>
            <person name="Loftus B.J."/>
            <person name="Xi Z."/>
            <person name="Megy K."/>
            <person name="Grabherr M."/>
            <person name="Ren Q."/>
            <person name="Zdobnov E.M."/>
            <person name="Lobo N.F."/>
            <person name="Campbell K.S."/>
            <person name="Brown S.E."/>
            <person name="Bonaldo M.F."/>
            <person name="Zhu J."/>
            <person name="Sinkins S.P."/>
            <person name="Hogenkamp D.G."/>
            <person name="Amedeo P."/>
            <person name="Arensburger P."/>
            <person name="Atkinson P.W."/>
            <person name="Bidwell S.L."/>
            <person name="Biedler J."/>
            <person name="Birney E."/>
            <person name="Bruggner R.V."/>
            <person name="Costas J."/>
            <person name="Coy M.R."/>
            <person name="Crabtree J."/>
            <person name="Crawford M."/>
            <person name="DeBruyn B."/>
            <person name="DeCaprio D."/>
            <person name="Eiglmeier K."/>
            <person name="Eisenstadt E."/>
            <person name="El-Dorry H."/>
            <person name="Gelbart W.M."/>
            <person name="Gomes S.L."/>
            <person name="Hammond M."/>
            <person name="Hannick L.I."/>
            <person name="Hogan J.R."/>
            <person name="Holmes M.H."/>
            <person name="Jaffe D."/>
            <person name="Johnston S.J."/>
            <person name="Kennedy R.C."/>
            <person name="Koo H."/>
            <person name="Kravitz S."/>
            <person name="Kriventseva E.V."/>
            <person name="Kulp D."/>
            <person name="Labutti K."/>
            <person name="Lee E."/>
            <person name="Li S."/>
            <person name="Lovin D.D."/>
            <person name="Mao C."/>
            <person name="Mauceli E."/>
            <person name="Menck C.F."/>
            <person name="Miller J.R."/>
            <person name="Montgomery P."/>
            <person name="Mori A."/>
            <person name="Nascimento A.L."/>
            <person name="Naveira H.F."/>
            <person name="Nusbaum C."/>
            <person name="O'Leary S.B."/>
            <person name="Orvis J."/>
            <person name="Pertea M."/>
            <person name="Quesneville H."/>
            <person name="Reidenbach K.R."/>
            <person name="Rogers Y.-H.C."/>
            <person name="Roth C.W."/>
            <person name="Schneider J.R."/>
            <person name="Schatz M."/>
            <person name="Shumway M."/>
            <person name="Stanke M."/>
            <person name="Stinson E.O."/>
            <person name="Tubio J.M.C."/>
            <person name="Vanzee J.P."/>
            <person name="Verjovski-Almeida S."/>
            <person name="Werner D."/>
            <person name="White O.R."/>
            <person name="Wyder S."/>
            <person name="Zeng Q."/>
            <person name="Zhao Q."/>
            <person name="Zhao Y."/>
            <person name="Hill C.A."/>
            <person name="Raikhel A.S."/>
            <person name="Soares M.B."/>
            <person name="Knudson D.L."/>
            <person name="Lee N.H."/>
            <person name="Galagan J."/>
            <person name="Salzberg S.L."/>
            <person name="Paulsen I.T."/>
            <person name="Dimopoulos G."/>
            <person name="Collins F.H."/>
            <person name="Bruce B."/>
            <person name="Fraser-Liggett C.M."/>
            <person name="Severson D.W."/>
        </authorList>
    </citation>
    <scope>NUCLEOTIDE SEQUENCE [LARGE SCALE GENOMIC DNA]</scope>
    <source>
        <strain>LVPib12</strain>
    </source>
</reference>
<feature type="chain" id="PRO_0000403495" description="Flap endonuclease 1">
    <location>
        <begin position="1"/>
        <end position="380"/>
    </location>
</feature>
<feature type="region of interest" description="N-domain">
    <location>
        <begin position="1"/>
        <end position="104"/>
    </location>
</feature>
<feature type="region of interest" description="I-domain">
    <location>
        <begin position="122"/>
        <end position="253"/>
    </location>
</feature>
<feature type="region of interest" description="Interaction with PCNA" evidence="1">
    <location>
        <begin position="336"/>
        <end position="344"/>
    </location>
</feature>
<feature type="region of interest" description="Disordered" evidence="2">
    <location>
        <begin position="342"/>
        <end position="380"/>
    </location>
</feature>
<feature type="compositionally biased region" description="Basic residues" evidence="2">
    <location>
        <begin position="363"/>
        <end position="380"/>
    </location>
</feature>
<feature type="binding site" evidence="1">
    <location>
        <position position="34"/>
    </location>
    <ligand>
        <name>Mg(2+)</name>
        <dbReference type="ChEBI" id="CHEBI:18420"/>
        <label>1</label>
    </ligand>
</feature>
<feature type="binding site" evidence="1">
    <location>
        <position position="47"/>
    </location>
    <ligand>
        <name>DNA</name>
        <dbReference type="ChEBI" id="CHEBI:16991"/>
    </ligand>
</feature>
<feature type="binding site" evidence="1">
    <location>
        <position position="70"/>
    </location>
    <ligand>
        <name>DNA</name>
        <dbReference type="ChEBI" id="CHEBI:16991"/>
    </ligand>
</feature>
<feature type="binding site" evidence="1">
    <location>
        <position position="86"/>
    </location>
    <ligand>
        <name>Mg(2+)</name>
        <dbReference type="ChEBI" id="CHEBI:18420"/>
        <label>1</label>
    </ligand>
</feature>
<feature type="binding site" evidence="1">
    <location>
        <position position="158"/>
    </location>
    <ligand>
        <name>DNA</name>
        <dbReference type="ChEBI" id="CHEBI:16991"/>
    </ligand>
</feature>
<feature type="binding site" evidence="1">
    <location>
        <position position="158"/>
    </location>
    <ligand>
        <name>Mg(2+)</name>
        <dbReference type="ChEBI" id="CHEBI:18420"/>
        <label>1</label>
    </ligand>
</feature>
<feature type="binding site" evidence="1">
    <location>
        <position position="160"/>
    </location>
    <ligand>
        <name>Mg(2+)</name>
        <dbReference type="ChEBI" id="CHEBI:18420"/>
        <label>1</label>
    </ligand>
</feature>
<feature type="binding site" evidence="1">
    <location>
        <position position="179"/>
    </location>
    <ligand>
        <name>Mg(2+)</name>
        <dbReference type="ChEBI" id="CHEBI:18420"/>
        <label>2</label>
    </ligand>
</feature>
<feature type="binding site" evidence="1">
    <location>
        <position position="181"/>
    </location>
    <ligand>
        <name>Mg(2+)</name>
        <dbReference type="ChEBI" id="CHEBI:18420"/>
        <label>2</label>
    </ligand>
</feature>
<feature type="binding site" evidence="1">
    <location>
        <position position="231"/>
    </location>
    <ligand>
        <name>DNA</name>
        <dbReference type="ChEBI" id="CHEBI:16991"/>
    </ligand>
</feature>
<feature type="binding site" evidence="1">
    <location>
        <position position="233"/>
    </location>
    <ligand>
        <name>DNA</name>
        <dbReference type="ChEBI" id="CHEBI:16991"/>
    </ligand>
</feature>
<feature type="binding site" evidence="1">
    <location>
        <position position="233"/>
    </location>
    <ligand>
        <name>Mg(2+)</name>
        <dbReference type="ChEBI" id="CHEBI:18420"/>
        <label>2</label>
    </ligand>
</feature>
<dbReference type="EC" id="3.1.-.-" evidence="1"/>
<dbReference type="EMBL" id="CH477362">
    <property type="protein sequence ID" value="EAT42621.1"/>
    <property type="molecule type" value="Genomic_DNA"/>
</dbReference>
<dbReference type="RefSeq" id="XP_001651504.1">
    <property type="nucleotide sequence ID" value="XM_001651454.1"/>
</dbReference>
<dbReference type="SMR" id="Q178M1"/>
<dbReference type="FunCoup" id="Q178M1">
    <property type="interactions" value="2067"/>
</dbReference>
<dbReference type="STRING" id="7159.Q178M1"/>
<dbReference type="PaxDb" id="7159-AAEL005870-PA"/>
<dbReference type="VEuPathDB" id="VectorBase:AAEL005870"/>
<dbReference type="eggNOG" id="KOG2519">
    <property type="taxonomic scope" value="Eukaryota"/>
</dbReference>
<dbReference type="HOGENOM" id="CLU_032444_2_0_1"/>
<dbReference type="InParanoid" id="Q178M1"/>
<dbReference type="OMA" id="MGIPWVQ"/>
<dbReference type="PhylomeDB" id="Q178M1"/>
<dbReference type="Proteomes" id="UP000008820">
    <property type="component" value="Unassembled WGS sequence"/>
</dbReference>
<dbReference type="Proteomes" id="UP000682892">
    <property type="component" value="Unassembled WGS sequence"/>
</dbReference>
<dbReference type="GO" id="GO:0005739">
    <property type="term" value="C:mitochondrion"/>
    <property type="evidence" value="ECO:0007669"/>
    <property type="project" value="UniProtKB-SubCell"/>
</dbReference>
<dbReference type="GO" id="GO:0005730">
    <property type="term" value="C:nucleolus"/>
    <property type="evidence" value="ECO:0007669"/>
    <property type="project" value="UniProtKB-SubCell"/>
</dbReference>
<dbReference type="GO" id="GO:0005654">
    <property type="term" value="C:nucleoplasm"/>
    <property type="evidence" value="ECO:0007669"/>
    <property type="project" value="UniProtKB-SubCell"/>
</dbReference>
<dbReference type="GO" id="GO:0008409">
    <property type="term" value="F:5'-3' exonuclease activity"/>
    <property type="evidence" value="ECO:0007669"/>
    <property type="project" value="UniProtKB-UniRule"/>
</dbReference>
<dbReference type="GO" id="GO:0017108">
    <property type="term" value="F:5'-flap endonuclease activity"/>
    <property type="evidence" value="ECO:0007669"/>
    <property type="project" value="UniProtKB-UniRule"/>
</dbReference>
<dbReference type="GO" id="GO:0003677">
    <property type="term" value="F:DNA binding"/>
    <property type="evidence" value="ECO:0007669"/>
    <property type="project" value="UniProtKB-UniRule"/>
</dbReference>
<dbReference type="GO" id="GO:0000287">
    <property type="term" value="F:magnesium ion binding"/>
    <property type="evidence" value="ECO:0007669"/>
    <property type="project" value="UniProtKB-UniRule"/>
</dbReference>
<dbReference type="GO" id="GO:0030145">
    <property type="term" value="F:manganese ion binding"/>
    <property type="evidence" value="ECO:0007669"/>
    <property type="project" value="TreeGrafter"/>
</dbReference>
<dbReference type="GO" id="GO:0004523">
    <property type="term" value="F:RNA-DNA hybrid ribonuclease activity"/>
    <property type="evidence" value="ECO:0007669"/>
    <property type="project" value="TreeGrafter"/>
</dbReference>
<dbReference type="GO" id="GO:0006284">
    <property type="term" value="P:base-excision repair"/>
    <property type="evidence" value="ECO:0007669"/>
    <property type="project" value="UniProtKB-UniRule"/>
</dbReference>
<dbReference type="GO" id="GO:0043137">
    <property type="term" value="P:DNA replication, removal of RNA primer"/>
    <property type="evidence" value="ECO:0007669"/>
    <property type="project" value="UniProtKB-UniRule"/>
</dbReference>
<dbReference type="CDD" id="cd09867">
    <property type="entry name" value="PIN_FEN1"/>
    <property type="match status" value="1"/>
</dbReference>
<dbReference type="FunFam" id="1.10.150.20:FF:000009">
    <property type="entry name" value="Flap endonuclease 1"/>
    <property type="match status" value="1"/>
</dbReference>
<dbReference type="FunFam" id="3.40.50.1010:FF:000003">
    <property type="entry name" value="Flap endonuclease 1"/>
    <property type="match status" value="1"/>
</dbReference>
<dbReference type="Gene3D" id="1.10.150.20">
    <property type="entry name" value="5' to 3' exonuclease, C-terminal subdomain"/>
    <property type="match status" value="1"/>
</dbReference>
<dbReference type="Gene3D" id="3.40.50.1010">
    <property type="entry name" value="5'-nuclease"/>
    <property type="match status" value="1"/>
</dbReference>
<dbReference type="HAMAP" id="MF_00614">
    <property type="entry name" value="Fen"/>
    <property type="match status" value="1"/>
</dbReference>
<dbReference type="InterPro" id="IPR036279">
    <property type="entry name" value="5-3_exonuclease_C_sf"/>
</dbReference>
<dbReference type="InterPro" id="IPR023426">
    <property type="entry name" value="Flap_endonuc"/>
</dbReference>
<dbReference type="InterPro" id="IPR008918">
    <property type="entry name" value="HhH2"/>
</dbReference>
<dbReference type="InterPro" id="IPR029060">
    <property type="entry name" value="PIN-like_dom_sf"/>
</dbReference>
<dbReference type="InterPro" id="IPR006086">
    <property type="entry name" value="XPG-I_dom"/>
</dbReference>
<dbReference type="InterPro" id="IPR006084">
    <property type="entry name" value="XPG/Rad2"/>
</dbReference>
<dbReference type="InterPro" id="IPR019974">
    <property type="entry name" value="XPG_CS"/>
</dbReference>
<dbReference type="InterPro" id="IPR006085">
    <property type="entry name" value="XPG_DNA_repair_N"/>
</dbReference>
<dbReference type="PANTHER" id="PTHR11081:SF9">
    <property type="entry name" value="FLAP ENDONUCLEASE 1"/>
    <property type="match status" value="1"/>
</dbReference>
<dbReference type="PANTHER" id="PTHR11081">
    <property type="entry name" value="FLAP ENDONUCLEASE FAMILY MEMBER"/>
    <property type="match status" value="1"/>
</dbReference>
<dbReference type="Pfam" id="PF00867">
    <property type="entry name" value="XPG_I"/>
    <property type="match status" value="1"/>
</dbReference>
<dbReference type="Pfam" id="PF00752">
    <property type="entry name" value="XPG_N"/>
    <property type="match status" value="1"/>
</dbReference>
<dbReference type="PRINTS" id="PR00853">
    <property type="entry name" value="XPGRADSUPER"/>
</dbReference>
<dbReference type="SMART" id="SM00279">
    <property type="entry name" value="HhH2"/>
    <property type="match status" value="1"/>
</dbReference>
<dbReference type="SMART" id="SM00484">
    <property type="entry name" value="XPGI"/>
    <property type="match status" value="1"/>
</dbReference>
<dbReference type="SMART" id="SM00485">
    <property type="entry name" value="XPGN"/>
    <property type="match status" value="1"/>
</dbReference>
<dbReference type="SUPFAM" id="SSF47807">
    <property type="entry name" value="5' to 3' exonuclease, C-terminal subdomain"/>
    <property type="match status" value="1"/>
</dbReference>
<dbReference type="SUPFAM" id="SSF88723">
    <property type="entry name" value="PIN domain-like"/>
    <property type="match status" value="1"/>
</dbReference>
<dbReference type="PROSITE" id="PS00841">
    <property type="entry name" value="XPG_1"/>
    <property type="match status" value="1"/>
</dbReference>
<dbReference type="PROSITE" id="PS00842">
    <property type="entry name" value="XPG_2"/>
    <property type="match status" value="1"/>
</dbReference>
<proteinExistence type="inferred from homology"/>
<sequence length="380" mass="42574">MGIKGLSQLIADLAPFAVKEGEIKNFFGRKVAIDASMCLYQFLIAVRAEGAQLTSVDGETTSHLMGTFYRTIRLLENGIKPVYVFDGKPPDLKSGELTKRAEKREEAQKALDKATEAGVTEDIDKFNRRLVKVTKQHSNEAKELLKLMGVPYVDAPCEAEAQCAALVKGGKVYATATEDMDALTFGSNILLRHLTFSEARKMPVQEFNYDKILQGLELTRDEFIDLCILLGCDYCDSIRGIGPKKAVELINKHRTIEKILENLDTKKYVVPENWNYQQARVLFKEPEVANPEEVELKWGEPDEEGLVKYLCGDRQFNEDRIRAGAKKILKTKSTATQGRLDSFFKVLPSTPNPKRKIEDKKTPASKKAKTTGGKPGRKPK</sequence>
<accession>Q178M1</accession>
<protein>
    <recommendedName>
        <fullName evidence="1">Flap endonuclease 1</fullName>
        <shortName evidence="1">FEN-1</shortName>
        <ecNumber evidence="1">3.1.-.-</ecNumber>
    </recommendedName>
    <alternativeName>
        <fullName evidence="1">Flap structure-specific endonuclease 1</fullName>
    </alternativeName>
</protein>
<keyword id="KW-0227">DNA damage</keyword>
<keyword id="KW-0234">DNA repair</keyword>
<keyword id="KW-0235">DNA replication</keyword>
<keyword id="KW-0255">Endonuclease</keyword>
<keyword id="KW-0269">Exonuclease</keyword>
<keyword id="KW-0378">Hydrolase</keyword>
<keyword id="KW-0460">Magnesium</keyword>
<keyword id="KW-0479">Metal-binding</keyword>
<keyword id="KW-0496">Mitochondrion</keyword>
<keyword id="KW-0540">Nuclease</keyword>
<keyword id="KW-0539">Nucleus</keyword>
<keyword id="KW-0597">Phosphoprotein</keyword>
<keyword id="KW-1185">Reference proteome</keyword>